<comment type="function">
    <text evidence="1">Functions in the N-end rule pathway of protein degradation where it conjugates Leu, Phe and, less efficiently, Met from aminoacyl-tRNAs to the N-termini of proteins containing an N-terminal arginine or lysine.</text>
</comment>
<comment type="catalytic activity">
    <reaction evidence="1">
        <text>N-terminal L-lysyl-[protein] + L-leucyl-tRNA(Leu) = N-terminal L-leucyl-L-lysyl-[protein] + tRNA(Leu) + H(+)</text>
        <dbReference type="Rhea" id="RHEA:12340"/>
        <dbReference type="Rhea" id="RHEA-COMP:9613"/>
        <dbReference type="Rhea" id="RHEA-COMP:9622"/>
        <dbReference type="Rhea" id="RHEA-COMP:12670"/>
        <dbReference type="Rhea" id="RHEA-COMP:12671"/>
        <dbReference type="ChEBI" id="CHEBI:15378"/>
        <dbReference type="ChEBI" id="CHEBI:65249"/>
        <dbReference type="ChEBI" id="CHEBI:78442"/>
        <dbReference type="ChEBI" id="CHEBI:78494"/>
        <dbReference type="ChEBI" id="CHEBI:133043"/>
        <dbReference type="EC" id="2.3.2.6"/>
    </reaction>
</comment>
<comment type="catalytic activity">
    <reaction evidence="1">
        <text>N-terminal L-arginyl-[protein] + L-leucyl-tRNA(Leu) = N-terminal L-leucyl-L-arginyl-[protein] + tRNA(Leu) + H(+)</text>
        <dbReference type="Rhea" id="RHEA:50416"/>
        <dbReference type="Rhea" id="RHEA-COMP:9613"/>
        <dbReference type="Rhea" id="RHEA-COMP:9622"/>
        <dbReference type="Rhea" id="RHEA-COMP:12672"/>
        <dbReference type="Rhea" id="RHEA-COMP:12673"/>
        <dbReference type="ChEBI" id="CHEBI:15378"/>
        <dbReference type="ChEBI" id="CHEBI:64719"/>
        <dbReference type="ChEBI" id="CHEBI:78442"/>
        <dbReference type="ChEBI" id="CHEBI:78494"/>
        <dbReference type="ChEBI" id="CHEBI:133044"/>
        <dbReference type="EC" id="2.3.2.6"/>
    </reaction>
</comment>
<comment type="catalytic activity">
    <reaction evidence="1">
        <text>L-phenylalanyl-tRNA(Phe) + an N-terminal L-alpha-aminoacyl-[protein] = an N-terminal L-phenylalanyl-L-alpha-aminoacyl-[protein] + tRNA(Phe)</text>
        <dbReference type="Rhea" id="RHEA:43632"/>
        <dbReference type="Rhea" id="RHEA-COMP:9668"/>
        <dbReference type="Rhea" id="RHEA-COMP:9699"/>
        <dbReference type="Rhea" id="RHEA-COMP:10636"/>
        <dbReference type="Rhea" id="RHEA-COMP:10637"/>
        <dbReference type="ChEBI" id="CHEBI:78442"/>
        <dbReference type="ChEBI" id="CHEBI:78531"/>
        <dbReference type="ChEBI" id="CHEBI:78597"/>
        <dbReference type="ChEBI" id="CHEBI:83561"/>
        <dbReference type="EC" id="2.3.2.6"/>
    </reaction>
</comment>
<comment type="subcellular location">
    <subcellularLocation>
        <location evidence="1">Cytoplasm</location>
    </subcellularLocation>
</comment>
<comment type="similarity">
    <text evidence="1">Belongs to the L/F-transferase family.</text>
</comment>
<feature type="chain" id="PRO_0000258093" description="Leucyl/phenylalanyl-tRNA--protein transferase">
    <location>
        <begin position="1"/>
        <end position="191"/>
    </location>
</feature>
<reference key="1">
    <citation type="submission" date="2006-06" db="EMBL/GenBank/DDBJ databases">
        <title>Complete sequence of Rubrobacter xylanophilus DSM 9941.</title>
        <authorList>
            <consortium name="US DOE Joint Genome Institute"/>
            <person name="Copeland A."/>
            <person name="Lucas S."/>
            <person name="Lapidus A."/>
            <person name="Barry K."/>
            <person name="Detter J.C."/>
            <person name="Glavina del Rio T."/>
            <person name="Hammon N."/>
            <person name="Israni S."/>
            <person name="Dalin E."/>
            <person name="Tice H."/>
            <person name="Pitluck S."/>
            <person name="Munk A.C."/>
            <person name="Brettin T."/>
            <person name="Bruce D."/>
            <person name="Han C."/>
            <person name="Tapia R."/>
            <person name="Gilna P."/>
            <person name="Schmutz J."/>
            <person name="Larimer F."/>
            <person name="Land M."/>
            <person name="Hauser L."/>
            <person name="Kyrpides N."/>
            <person name="Lykidis A."/>
            <person name="da Costa M.S."/>
            <person name="Rainey F.A."/>
            <person name="Empadinhas N."/>
            <person name="Jolivet E."/>
            <person name="Battista J.R."/>
            <person name="Richardson P."/>
        </authorList>
    </citation>
    <scope>NUCLEOTIDE SEQUENCE [LARGE SCALE GENOMIC DNA]</scope>
    <source>
        <strain>DSM 9941 / JCM 11954 / NBRC 16129 / PRD-1</strain>
    </source>
</reference>
<evidence type="ECO:0000255" key="1">
    <source>
        <dbReference type="HAMAP-Rule" id="MF_00688"/>
    </source>
</evidence>
<sequence length="191" mass="21521">MRLTPELLVECYRRGLFPMAGPGGRVGLYRSDPRAVLELDALHVSKSLARVLRKGVYEVRIDQDFEAVIRACADREETWISEEIIRAFLGLHRRGLAHSVEAYDGEGRLAGGLYGVALGGAFFGESMFSRRPDASKVCLVRLVERLRERGYVLLDCQVQSPHLERMGAVEIPEAEFMRRLSEALRLDRAFA</sequence>
<accession>Q1AX36</accession>
<name>LFTR_RUBXD</name>
<gene>
    <name evidence="1" type="primary">aat</name>
    <name type="ordered locus">Rxyl_1076</name>
</gene>
<proteinExistence type="inferred from homology"/>
<keyword id="KW-0012">Acyltransferase</keyword>
<keyword id="KW-0963">Cytoplasm</keyword>
<keyword id="KW-1185">Reference proteome</keyword>
<keyword id="KW-0808">Transferase</keyword>
<organism>
    <name type="scientific">Rubrobacter xylanophilus (strain DSM 9941 / JCM 11954 / NBRC 16129 / PRD-1)</name>
    <dbReference type="NCBI Taxonomy" id="266117"/>
    <lineage>
        <taxon>Bacteria</taxon>
        <taxon>Bacillati</taxon>
        <taxon>Actinomycetota</taxon>
        <taxon>Rubrobacteria</taxon>
        <taxon>Rubrobacterales</taxon>
        <taxon>Rubrobacteraceae</taxon>
        <taxon>Rubrobacter</taxon>
    </lineage>
</organism>
<dbReference type="EC" id="2.3.2.6" evidence="1"/>
<dbReference type="EMBL" id="CP000386">
    <property type="protein sequence ID" value="ABG04042.1"/>
    <property type="molecule type" value="Genomic_DNA"/>
</dbReference>
<dbReference type="RefSeq" id="WP_011564060.1">
    <property type="nucleotide sequence ID" value="NC_008148.1"/>
</dbReference>
<dbReference type="SMR" id="Q1AX36"/>
<dbReference type="STRING" id="266117.Rxyl_1076"/>
<dbReference type="KEGG" id="rxy:Rxyl_1076"/>
<dbReference type="eggNOG" id="COG2360">
    <property type="taxonomic scope" value="Bacteria"/>
</dbReference>
<dbReference type="HOGENOM" id="CLU_075045_1_1_11"/>
<dbReference type="OrthoDB" id="9790282at2"/>
<dbReference type="PhylomeDB" id="Q1AX36"/>
<dbReference type="Proteomes" id="UP000006637">
    <property type="component" value="Chromosome"/>
</dbReference>
<dbReference type="GO" id="GO:0005737">
    <property type="term" value="C:cytoplasm"/>
    <property type="evidence" value="ECO:0007669"/>
    <property type="project" value="UniProtKB-SubCell"/>
</dbReference>
<dbReference type="GO" id="GO:0008914">
    <property type="term" value="F:leucyl-tRNA--protein transferase activity"/>
    <property type="evidence" value="ECO:0007669"/>
    <property type="project" value="UniProtKB-UniRule"/>
</dbReference>
<dbReference type="GO" id="GO:0030163">
    <property type="term" value="P:protein catabolic process"/>
    <property type="evidence" value="ECO:0007669"/>
    <property type="project" value="UniProtKB-UniRule"/>
</dbReference>
<dbReference type="FunFam" id="3.40.630.70:FF:000001">
    <property type="entry name" value="Leucyl/phenylalanyl-tRNA--protein transferase"/>
    <property type="match status" value="1"/>
</dbReference>
<dbReference type="Gene3D" id="3.40.630.70">
    <property type="entry name" value="Leucyl/phenylalanyl-tRNA-protein transferase, C-terminal domain"/>
    <property type="match status" value="1"/>
</dbReference>
<dbReference type="HAMAP" id="MF_00688">
    <property type="entry name" value="Leu_Phe_trans"/>
    <property type="match status" value="1"/>
</dbReference>
<dbReference type="InterPro" id="IPR016181">
    <property type="entry name" value="Acyl_CoA_acyltransferase"/>
</dbReference>
<dbReference type="InterPro" id="IPR004616">
    <property type="entry name" value="Leu/Phe-tRNA_Trfase"/>
</dbReference>
<dbReference type="InterPro" id="IPR042203">
    <property type="entry name" value="Leu/Phe-tRNA_Trfase_C"/>
</dbReference>
<dbReference type="NCBIfam" id="TIGR00667">
    <property type="entry name" value="aat"/>
    <property type="match status" value="1"/>
</dbReference>
<dbReference type="PANTHER" id="PTHR30098">
    <property type="entry name" value="LEUCYL/PHENYLALANYL-TRNA--PROTEIN TRANSFERASE"/>
    <property type="match status" value="1"/>
</dbReference>
<dbReference type="PANTHER" id="PTHR30098:SF2">
    <property type="entry name" value="LEUCYL_PHENYLALANYL-TRNA--PROTEIN TRANSFERASE"/>
    <property type="match status" value="1"/>
</dbReference>
<dbReference type="Pfam" id="PF03588">
    <property type="entry name" value="Leu_Phe_trans"/>
    <property type="match status" value="1"/>
</dbReference>
<dbReference type="SUPFAM" id="SSF55729">
    <property type="entry name" value="Acyl-CoA N-acyltransferases (Nat)"/>
    <property type="match status" value="1"/>
</dbReference>
<protein>
    <recommendedName>
        <fullName evidence="1">Leucyl/phenylalanyl-tRNA--protein transferase</fullName>
        <ecNumber evidence="1">2.3.2.6</ecNumber>
    </recommendedName>
    <alternativeName>
        <fullName evidence="1">L/F-transferase</fullName>
    </alternativeName>
    <alternativeName>
        <fullName evidence="1">Leucyltransferase</fullName>
    </alternativeName>
    <alternativeName>
        <fullName evidence="1">Phenyalanyltransferase</fullName>
    </alternativeName>
</protein>